<keyword id="KW-0028">Amino-acid biosynthesis</keyword>
<keyword id="KW-0963">Cytoplasm</keyword>
<keyword id="KW-0368">Histidine biosynthesis</keyword>
<keyword id="KW-0456">Lyase</keyword>
<proteinExistence type="inferred from homology"/>
<feature type="chain" id="PRO_0000336317" description="Imidazoleglycerol-phosphate dehydratase">
    <location>
        <begin position="1"/>
        <end position="197"/>
    </location>
</feature>
<organism>
    <name type="scientific">Leptospira biflexa serovar Patoc (strain Patoc 1 / Ames)</name>
    <dbReference type="NCBI Taxonomy" id="355278"/>
    <lineage>
        <taxon>Bacteria</taxon>
        <taxon>Pseudomonadati</taxon>
        <taxon>Spirochaetota</taxon>
        <taxon>Spirochaetia</taxon>
        <taxon>Leptospirales</taxon>
        <taxon>Leptospiraceae</taxon>
        <taxon>Leptospira</taxon>
    </lineage>
</organism>
<name>HIS7_LEPBA</name>
<dbReference type="EC" id="4.2.1.19" evidence="1"/>
<dbReference type="EMBL" id="CP000777">
    <property type="protein sequence ID" value="ABZ93374.1"/>
    <property type="molecule type" value="Genomic_DNA"/>
</dbReference>
<dbReference type="SMR" id="B0SDS4"/>
<dbReference type="KEGG" id="lbf:LBF_0841"/>
<dbReference type="HOGENOM" id="CLU_044308_3_0_12"/>
<dbReference type="UniPathway" id="UPA00031">
    <property type="reaction ID" value="UER00011"/>
</dbReference>
<dbReference type="GO" id="GO:0005737">
    <property type="term" value="C:cytoplasm"/>
    <property type="evidence" value="ECO:0007669"/>
    <property type="project" value="UniProtKB-SubCell"/>
</dbReference>
<dbReference type="GO" id="GO:0004424">
    <property type="term" value="F:imidazoleglycerol-phosphate dehydratase activity"/>
    <property type="evidence" value="ECO:0007669"/>
    <property type="project" value="UniProtKB-UniRule"/>
</dbReference>
<dbReference type="GO" id="GO:0000105">
    <property type="term" value="P:L-histidine biosynthetic process"/>
    <property type="evidence" value="ECO:0007669"/>
    <property type="project" value="UniProtKB-UniRule"/>
</dbReference>
<dbReference type="CDD" id="cd07914">
    <property type="entry name" value="IGPD"/>
    <property type="match status" value="1"/>
</dbReference>
<dbReference type="FunFam" id="3.30.230.40:FF:000001">
    <property type="entry name" value="Imidazoleglycerol-phosphate dehydratase HisB"/>
    <property type="match status" value="1"/>
</dbReference>
<dbReference type="FunFam" id="3.30.230.40:FF:000003">
    <property type="entry name" value="Imidazoleglycerol-phosphate dehydratase HisB"/>
    <property type="match status" value="1"/>
</dbReference>
<dbReference type="Gene3D" id="3.30.230.40">
    <property type="entry name" value="Imidazole glycerol phosphate dehydratase, domain 1"/>
    <property type="match status" value="2"/>
</dbReference>
<dbReference type="HAMAP" id="MF_00076">
    <property type="entry name" value="HisB"/>
    <property type="match status" value="1"/>
</dbReference>
<dbReference type="InterPro" id="IPR038494">
    <property type="entry name" value="IGPD_sf"/>
</dbReference>
<dbReference type="InterPro" id="IPR000807">
    <property type="entry name" value="ImidazoleglycerolP_deHydtase"/>
</dbReference>
<dbReference type="InterPro" id="IPR020565">
    <property type="entry name" value="ImidazoleglycerP_deHydtase_CS"/>
</dbReference>
<dbReference type="InterPro" id="IPR020568">
    <property type="entry name" value="Ribosomal_Su5_D2-typ_SF"/>
</dbReference>
<dbReference type="NCBIfam" id="NF002114">
    <property type="entry name" value="PRK00951.2-4"/>
    <property type="match status" value="1"/>
</dbReference>
<dbReference type="PANTHER" id="PTHR23133:SF2">
    <property type="entry name" value="IMIDAZOLEGLYCEROL-PHOSPHATE DEHYDRATASE"/>
    <property type="match status" value="1"/>
</dbReference>
<dbReference type="PANTHER" id="PTHR23133">
    <property type="entry name" value="IMIDAZOLEGLYCEROL-PHOSPHATE DEHYDRATASE HIS7"/>
    <property type="match status" value="1"/>
</dbReference>
<dbReference type="Pfam" id="PF00475">
    <property type="entry name" value="IGPD"/>
    <property type="match status" value="1"/>
</dbReference>
<dbReference type="SUPFAM" id="SSF54211">
    <property type="entry name" value="Ribosomal protein S5 domain 2-like"/>
    <property type="match status" value="2"/>
</dbReference>
<dbReference type="PROSITE" id="PS00954">
    <property type="entry name" value="IGP_DEHYDRATASE_1"/>
    <property type="match status" value="1"/>
</dbReference>
<dbReference type="PROSITE" id="PS00955">
    <property type="entry name" value="IGP_DEHYDRATASE_2"/>
    <property type="match status" value="1"/>
</dbReference>
<protein>
    <recommendedName>
        <fullName evidence="1">Imidazoleglycerol-phosphate dehydratase</fullName>
        <shortName evidence="1">IGPD</shortName>
        <ecNumber evidence="1">4.2.1.19</ecNumber>
    </recommendedName>
</protein>
<gene>
    <name evidence="1" type="primary">hisB</name>
    <name type="ordered locus">LBF_0841</name>
</gene>
<reference key="1">
    <citation type="journal article" date="2008" name="PLoS ONE">
        <title>Genome sequence of the saprophyte Leptospira biflexa provides insights into the evolution of Leptospira and the pathogenesis of leptospirosis.</title>
        <authorList>
            <person name="Picardeau M."/>
            <person name="Bulach D.M."/>
            <person name="Bouchier C."/>
            <person name="Zuerner R.L."/>
            <person name="Zidane N."/>
            <person name="Wilson P.J."/>
            <person name="Creno S."/>
            <person name="Kuczek E.S."/>
            <person name="Bommezzadri S."/>
            <person name="Davis J.C."/>
            <person name="McGrath A."/>
            <person name="Johnson M.J."/>
            <person name="Boursaux-Eude C."/>
            <person name="Seemann T."/>
            <person name="Rouy Z."/>
            <person name="Coppel R.L."/>
            <person name="Rood J.I."/>
            <person name="Lajus A."/>
            <person name="Davies J.K."/>
            <person name="Medigue C."/>
            <person name="Adler B."/>
        </authorList>
    </citation>
    <scope>NUCLEOTIDE SEQUENCE [LARGE SCALE GENOMIC DNA]</scope>
    <source>
        <strain>Patoc 1 / Ames</strain>
    </source>
</reference>
<sequence length="197" mass="22172">MLRNMVESRKTSETDIRLDLNLRGSGVYAFDTEIPFFEHMLSHIAKHGLIDMDLKLRGDIGIDCHHSVEDTAILLGQMIHTQLGDKKGIFRYGNFTLPMDEVLTTVAVDLGGRFYFKYTGPALDGKFGIYDAELTLEFLQKLALNAKMNLHVVVHYGENRHHIHESIFKALGKALRQAIAIDTSAKDQIPSTKGMLE</sequence>
<evidence type="ECO:0000255" key="1">
    <source>
        <dbReference type="HAMAP-Rule" id="MF_00076"/>
    </source>
</evidence>
<comment type="catalytic activity">
    <reaction evidence="1">
        <text>D-erythro-1-(imidazol-4-yl)glycerol 3-phosphate = 3-(imidazol-4-yl)-2-oxopropyl phosphate + H2O</text>
        <dbReference type="Rhea" id="RHEA:11040"/>
        <dbReference type="ChEBI" id="CHEBI:15377"/>
        <dbReference type="ChEBI" id="CHEBI:57766"/>
        <dbReference type="ChEBI" id="CHEBI:58278"/>
        <dbReference type="EC" id="4.2.1.19"/>
    </reaction>
</comment>
<comment type="pathway">
    <text evidence="1">Amino-acid biosynthesis; L-histidine biosynthesis; L-histidine from 5-phospho-alpha-D-ribose 1-diphosphate: step 6/9.</text>
</comment>
<comment type="subcellular location">
    <subcellularLocation>
        <location evidence="1">Cytoplasm</location>
    </subcellularLocation>
</comment>
<comment type="similarity">
    <text evidence="1">Belongs to the imidazoleglycerol-phosphate dehydratase family.</text>
</comment>
<accession>B0SDS4</accession>